<comment type="function">
    <text>The phosphoenolpyruvate-dependent sugar phosphotransferase system (PTS), a major carbohydrate active -transport system, catalyzes the phosphorylation of incoming sugar substrates concomitant with their translocation across the cell membrane. This system is involved in N-acetylgalactosamine transport.</text>
</comment>
<comment type="subcellular location">
    <subcellularLocation>
        <location evidence="3">Cell inner membrane</location>
        <topology>Multi-pass membrane protein</topology>
    </subcellularLocation>
    <text evidence="3">When overexpressed using vectors that provide a promoter and ribosome binding site (PubMed:15919996).</text>
</comment>
<comment type="domain">
    <text>The EIIC domain forms the PTS system translocation channel and contains the specific substrate-binding site.</text>
</comment>
<comment type="caution">
    <text evidence="4">Could be the product of a pseudogene.</text>
</comment>
<dbReference type="EMBL" id="U18997">
    <property type="protein sequence ID" value="AAA57937.1"/>
    <property type="molecule type" value="Genomic_DNA"/>
</dbReference>
<dbReference type="EMBL" id="U00096">
    <property type="status" value="NOT_ANNOTATED_CDS"/>
    <property type="molecule type" value="Genomic_DNA"/>
</dbReference>
<dbReference type="PIR" id="B65103">
    <property type="entry name" value="B65103"/>
</dbReference>
<dbReference type="SMR" id="P42905"/>
<dbReference type="FunCoup" id="P42905">
    <property type="interactions" value="306"/>
</dbReference>
<dbReference type="KEGG" id="ecoc:C3026_17080"/>
<dbReference type="PATRIC" id="fig|1411691.4.peg.3597"/>
<dbReference type="EchoBASE" id="EB2618"/>
<dbReference type="InParanoid" id="P42905"/>
<dbReference type="PhylomeDB" id="P42905"/>
<dbReference type="Proteomes" id="UP000000625">
    <property type="component" value="Chromosome"/>
</dbReference>
<dbReference type="GO" id="GO:0005886">
    <property type="term" value="C:plasma membrane"/>
    <property type="evidence" value="ECO:0007669"/>
    <property type="project" value="UniProtKB-SubCell"/>
</dbReference>
<dbReference type="GO" id="GO:0009401">
    <property type="term" value="P:phosphoenolpyruvate-dependent sugar phosphotransferase system"/>
    <property type="evidence" value="ECO:0007669"/>
    <property type="project" value="UniProtKB-KW"/>
</dbReference>
<dbReference type="InterPro" id="IPR004700">
    <property type="entry name" value="PTS_IIC_man"/>
</dbReference>
<dbReference type="Pfam" id="PF03609">
    <property type="entry name" value="EII-Sor"/>
    <property type="match status" value="1"/>
</dbReference>
<dbReference type="PROSITE" id="PS51106">
    <property type="entry name" value="PTS_EIIC_TYPE_4"/>
    <property type="match status" value="1"/>
</dbReference>
<name>PTPC2_ECOLI</name>
<feature type="chain" id="PRO_0000186661" description="Putative N-acetylgalactosamine permease IIC component 2">
    <location>
        <begin position="1"/>
        <end position="133"/>
    </location>
</feature>
<feature type="topological domain" description="Cytoplasmic" evidence="1">
    <location>
        <begin position="1"/>
        <end position="2"/>
    </location>
</feature>
<feature type="transmembrane region" description="Helical" evidence="2">
    <location>
        <begin position="3"/>
        <end position="23"/>
    </location>
</feature>
<feature type="topological domain" description="Periplasmic" evidence="1">
    <location>
        <begin position="24"/>
        <end position="32"/>
    </location>
</feature>
<feature type="transmembrane region" description="Helical" evidence="2">
    <location>
        <begin position="33"/>
        <end position="53"/>
    </location>
</feature>
<feature type="topological domain" description="Cytoplasmic" evidence="1">
    <location>
        <begin position="54"/>
        <end position="65"/>
    </location>
</feature>
<feature type="transmembrane region" description="Helical" evidence="2">
    <location>
        <begin position="66"/>
        <end position="86"/>
    </location>
</feature>
<feature type="topological domain" description="Periplasmic" evidence="1">
    <location>
        <begin position="87"/>
        <end position="93"/>
    </location>
</feature>
<feature type="transmembrane region" description="Helical" evidence="2">
    <location>
        <begin position="94"/>
        <end position="114"/>
    </location>
</feature>
<feature type="topological domain" description="Cytoplasmic" evidence="1 3">
    <location>
        <begin position="115"/>
        <end position="133"/>
    </location>
</feature>
<feature type="domain" description="PTS EIIC type-4" evidence="2">
    <location>
        <begin position="1"/>
        <end position="133"/>
    </location>
</feature>
<gene>
    <name type="primary">agaW</name>
    <name type="ordered locus">b3134</name>
</gene>
<reference key="1">
    <citation type="journal article" date="1997" name="Science">
        <title>The complete genome sequence of Escherichia coli K-12.</title>
        <authorList>
            <person name="Blattner F.R."/>
            <person name="Plunkett G. III"/>
            <person name="Bloch C.A."/>
            <person name="Perna N.T."/>
            <person name="Burland V."/>
            <person name="Riley M."/>
            <person name="Collado-Vides J."/>
            <person name="Glasner J.D."/>
            <person name="Rode C.K."/>
            <person name="Mayhew G.F."/>
            <person name="Gregor J."/>
            <person name="Davis N.W."/>
            <person name="Kirkpatrick H.A."/>
            <person name="Goeden M.A."/>
            <person name="Rose D.J."/>
            <person name="Mau B."/>
            <person name="Shao Y."/>
        </authorList>
    </citation>
    <scope>NUCLEOTIDE SEQUENCE [LARGE SCALE GENOMIC DNA]</scope>
    <source>
        <strain>K12 / MG1655 / ATCC 47076</strain>
    </source>
</reference>
<reference key="2">
    <citation type="journal article" date="1996" name="Microbiology">
        <title>Novel phosphotransferase genes revealed by bacterial genome sequencing: a gene cluster encoding a putative N-acetylgalactosamine metabolic pathway in Escherichia coli.</title>
        <authorList>
            <person name="Reizer J."/>
            <person name="Ramseier T.M."/>
            <person name="Reizer A."/>
            <person name="Charbit A."/>
            <person name="Saier M.H. Jr."/>
        </authorList>
    </citation>
    <scope>DISCUSSION OF SEQUENCE</scope>
</reference>
<reference key="3">
    <citation type="journal article" date="2005" name="Science">
        <title>Global topology analysis of the Escherichia coli inner membrane proteome.</title>
        <authorList>
            <person name="Daley D.O."/>
            <person name="Rapp M."/>
            <person name="Granseth E."/>
            <person name="Melen K."/>
            <person name="Drew D."/>
            <person name="von Heijne G."/>
        </authorList>
    </citation>
    <scope>SUBCELLULAR LOCATION</scope>
    <scope>TOPOLOGY [LARGE SCALE ANALYSIS]</scope>
    <source>
        <strain>K12 / MG1655 / ATCC 47076</strain>
    </source>
</reference>
<sequence>MEISLLQAFALGIIAFIAGLDMFNGLTHMHRPVVLGPLVGLVLGDLHTGILTGGTLELVWMGLAPLAGAQPPNVIIGTIVGTAFAITTGVKPDVAVGVAVPFAVAVQMGITFLFSVMSGVMSRCDLATNPRRI</sequence>
<protein>
    <recommendedName>
        <fullName>Putative N-acetylgalactosamine permease IIC component 2</fullName>
    </recommendedName>
    <alternativeName>
        <fullName>EIIC-Aga'</fullName>
    </alternativeName>
    <alternativeName>
        <fullName>PTS system N-acetylgalactosamine-specific EIIC component 2</fullName>
    </alternativeName>
</protein>
<proteinExistence type="uncertain"/>
<accession>P42905</accession>
<organism>
    <name type="scientific">Escherichia coli (strain K12)</name>
    <dbReference type="NCBI Taxonomy" id="83333"/>
    <lineage>
        <taxon>Bacteria</taxon>
        <taxon>Pseudomonadati</taxon>
        <taxon>Pseudomonadota</taxon>
        <taxon>Gammaproteobacteria</taxon>
        <taxon>Enterobacterales</taxon>
        <taxon>Enterobacteriaceae</taxon>
        <taxon>Escherichia</taxon>
    </lineage>
</organism>
<evidence type="ECO:0000255" key="1"/>
<evidence type="ECO:0000255" key="2">
    <source>
        <dbReference type="PROSITE-ProRule" id="PRU00429"/>
    </source>
</evidence>
<evidence type="ECO:0000269" key="3">
    <source>
    </source>
</evidence>
<evidence type="ECO:0000305" key="4"/>
<keyword id="KW-0997">Cell inner membrane</keyword>
<keyword id="KW-1003">Cell membrane</keyword>
<keyword id="KW-0472">Membrane</keyword>
<keyword id="KW-0598">Phosphotransferase system</keyword>
<keyword id="KW-1185">Reference proteome</keyword>
<keyword id="KW-0762">Sugar transport</keyword>
<keyword id="KW-0812">Transmembrane</keyword>
<keyword id="KW-1133">Transmembrane helix</keyword>
<keyword id="KW-0813">Transport</keyword>